<gene>
    <name evidence="1" type="primary">accA</name>
    <name type="ordered locus">SEQ_0488</name>
</gene>
<organism>
    <name type="scientific">Streptococcus equi subsp. equi (strain 4047)</name>
    <dbReference type="NCBI Taxonomy" id="553482"/>
    <lineage>
        <taxon>Bacteria</taxon>
        <taxon>Bacillati</taxon>
        <taxon>Bacillota</taxon>
        <taxon>Bacilli</taxon>
        <taxon>Lactobacillales</taxon>
        <taxon>Streptococcaceae</taxon>
        <taxon>Streptococcus</taxon>
    </lineage>
</organism>
<proteinExistence type="inferred from homology"/>
<evidence type="ECO:0000255" key="1">
    <source>
        <dbReference type="HAMAP-Rule" id="MF_00823"/>
    </source>
</evidence>
<evidence type="ECO:0000255" key="2">
    <source>
        <dbReference type="PROSITE-ProRule" id="PRU01137"/>
    </source>
</evidence>
<feature type="chain" id="PRO_1000148750" description="Acetyl-coenzyme A carboxylase carboxyl transferase subunit alpha">
    <location>
        <begin position="1"/>
        <end position="256"/>
    </location>
</feature>
<feature type="domain" description="CoA carboxyltransferase C-terminal" evidence="2">
    <location>
        <begin position="1"/>
        <end position="236"/>
    </location>
</feature>
<reference key="1">
    <citation type="journal article" date="2009" name="PLoS Pathog.">
        <title>Genomic evidence for the evolution of Streptococcus equi: host restriction, increased virulence, and genetic exchange with human pathogens.</title>
        <authorList>
            <person name="Holden M.T.G."/>
            <person name="Heather Z."/>
            <person name="Paillot R."/>
            <person name="Steward K.F."/>
            <person name="Webb K."/>
            <person name="Ainslie F."/>
            <person name="Jourdan T."/>
            <person name="Bason N.C."/>
            <person name="Holroyd N.E."/>
            <person name="Mungall K."/>
            <person name="Quail M.A."/>
            <person name="Sanders M."/>
            <person name="Simmonds M."/>
            <person name="Willey D."/>
            <person name="Brooks K."/>
            <person name="Aanensen D.M."/>
            <person name="Spratt B.G."/>
            <person name="Jolley K.A."/>
            <person name="Maiden M.C.J."/>
            <person name="Kehoe M."/>
            <person name="Chanter N."/>
            <person name="Bentley S.D."/>
            <person name="Robinson C."/>
            <person name="Maskell D.J."/>
            <person name="Parkhill J."/>
            <person name="Waller A.S."/>
        </authorList>
    </citation>
    <scope>NUCLEOTIDE SEQUENCE [LARGE SCALE GENOMIC DNA]</scope>
    <source>
        <strain>4047</strain>
    </source>
</reference>
<accession>C0M857</accession>
<keyword id="KW-0067">ATP-binding</keyword>
<keyword id="KW-0963">Cytoplasm</keyword>
<keyword id="KW-0275">Fatty acid biosynthesis</keyword>
<keyword id="KW-0276">Fatty acid metabolism</keyword>
<keyword id="KW-0444">Lipid biosynthesis</keyword>
<keyword id="KW-0443">Lipid metabolism</keyword>
<keyword id="KW-0547">Nucleotide-binding</keyword>
<keyword id="KW-0808">Transferase</keyword>
<name>ACCA_STRE4</name>
<sequence>MTDVARILKEARDQGRMTALDYASLIFDEFMELHGDRQFADDGSIVGGIAYLADQPVTVIGIQKGKNLQDNLARNFGQPHPEGYRKALRLMKQAEKFGRPVITFINTAGAYPGVGAEERGQGEAIARNLMEMSDLKVPIIAIIIGEGGSGGALALAVADQVWMLENTMYAVLSPEGFASILWKDGSRATEAAELMKITAAELYQMGVIDRIIPERGYFSSEIVEMIKSHLIDEITQLQAKPLEELLDQRYQRFRKY</sequence>
<comment type="function">
    <text evidence="1">Component of the acetyl coenzyme A carboxylase (ACC) complex. First, biotin carboxylase catalyzes the carboxylation of biotin on its carrier protein (BCCP) and then the CO(2) group is transferred by the carboxyltransferase to acetyl-CoA to form malonyl-CoA.</text>
</comment>
<comment type="catalytic activity">
    <reaction evidence="1">
        <text>N(6)-carboxybiotinyl-L-lysyl-[protein] + acetyl-CoA = N(6)-biotinyl-L-lysyl-[protein] + malonyl-CoA</text>
        <dbReference type="Rhea" id="RHEA:54728"/>
        <dbReference type="Rhea" id="RHEA-COMP:10505"/>
        <dbReference type="Rhea" id="RHEA-COMP:10506"/>
        <dbReference type="ChEBI" id="CHEBI:57288"/>
        <dbReference type="ChEBI" id="CHEBI:57384"/>
        <dbReference type="ChEBI" id="CHEBI:83144"/>
        <dbReference type="ChEBI" id="CHEBI:83145"/>
        <dbReference type="EC" id="2.1.3.15"/>
    </reaction>
</comment>
<comment type="pathway">
    <text evidence="1">Lipid metabolism; malonyl-CoA biosynthesis; malonyl-CoA from acetyl-CoA: step 1/1.</text>
</comment>
<comment type="subunit">
    <text evidence="1">Acetyl-CoA carboxylase is a heterohexamer composed of biotin carboxyl carrier protein (AccB), biotin carboxylase (AccC) and two subunits each of ACCase subunit alpha (AccA) and ACCase subunit beta (AccD).</text>
</comment>
<comment type="subcellular location">
    <subcellularLocation>
        <location evidence="1">Cytoplasm</location>
    </subcellularLocation>
</comment>
<comment type="similarity">
    <text evidence="1">Belongs to the AccA family.</text>
</comment>
<protein>
    <recommendedName>
        <fullName evidence="1">Acetyl-coenzyme A carboxylase carboxyl transferase subunit alpha</fullName>
        <shortName evidence="1">ACCase subunit alpha</shortName>
        <shortName evidence="1">Acetyl-CoA carboxylase carboxyltransferase subunit alpha</shortName>
        <ecNumber evidence="1">2.1.3.15</ecNumber>
    </recommendedName>
</protein>
<dbReference type="EC" id="2.1.3.15" evidence="1"/>
<dbReference type="EMBL" id="FM204883">
    <property type="protein sequence ID" value="CAW92701.1"/>
    <property type="molecule type" value="Genomic_DNA"/>
</dbReference>
<dbReference type="RefSeq" id="WP_012679084.1">
    <property type="nucleotide sequence ID" value="NC_012471.1"/>
</dbReference>
<dbReference type="SMR" id="C0M857"/>
<dbReference type="KEGG" id="seu:SEQ_0488"/>
<dbReference type="HOGENOM" id="CLU_015486_0_2_9"/>
<dbReference type="OrthoDB" id="9808023at2"/>
<dbReference type="UniPathway" id="UPA00655">
    <property type="reaction ID" value="UER00711"/>
</dbReference>
<dbReference type="Proteomes" id="UP000001365">
    <property type="component" value="Chromosome"/>
</dbReference>
<dbReference type="GO" id="GO:0009317">
    <property type="term" value="C:acetyl-CoA carboxylase complex"/>
    <property type="evidence" value="ECO:0007669"/>
    <property type="project" value="InterPro"/>
</dbReference>
<dbReference type="GO" id="GO:0003989">
    <property type="term" value="F:acetyl-CoA carboxylase activity"/>
    <property type="evidence" value="ECO:0007669"/>
    <property type="project" value="InterPro"/>
</dbReference>
<dbReference type="GO" id="GO:0005524">
    <property type="term" value="F:ATP binding"/>
    <property type="evidence" value="ECO:0007669"/>
    <property type="project" value="UniProtKB-KW"/>
</dbReference>
<dbReference type="GO" id="GO:0016743">
    <property type="term" value="F:carboxyl- or carbamoyltransferase activity"/>
    <property type="evidence" value="ECO:0007669"/>
    <property type="project" value="UniProtKB-UniRule"/>
</dbReference>
<dbReference type="GO" id="GO:0006633">
    <property type="term" value="P:fatty acid biosynthetic process"/>
    <property type="evidence" value="ECO:0007669"/>
    <property type="project" value="UniProtKB-KW"/>
</dbReference>
<dbReference type="GO" id="GO:2001295">
    <property type="term" value="P:malonyl-CoA biosynthetic process"/>
    <property type="evidence" value="ECO:0007669"/>
    <property type="project" value="UniProtKB-UniRule"/>
</dbReference>
<dbReference type="Gene3D" id="3.90.226.10">
    <property type="entry name" value="2-enoyl-CoA Hydratase, Chain A, domain 1"/>
    <property type="match status" value="1"/>
</dbReference>
<dbReference type="HAMAP" id="MF_00823">
    <property type="entry name" value="AcetylCoA_CT_alpha"/>
    <property type="match status" value="1"/>
</dbReference>
<dbReference type="InterPro" id="IPR001095">
    <property type="entry name" value="Acetyl_CoA_COase_a_su"/>
</dbReference>
<dbReference type="InterPro" id="IPR029045">
    <property type="entry name" value="ClpP/crotonase-like_dom_sf"/>
</dbReference>
<dbReference type="InterPro" id="IPR011763">
    <property type="entry name" value="COA_CT_C"/>
</dbReference>
<dbReference type="NCBIfam" id="TIGR00513">
    <property type="entry name" value="accA"/>
    <property type="match status" value="1"/>
</dbReference>
<dbReference type="NCBIfam" id="NF041504">
    <property type="entry name" value="AccA_sub"/>
    <property type="match status" value="1"/>
</dbReference>
<dbReference type="NCBIfam" id="NF004344">
    <property type="entry name" value="PRK05724.1"/>
    <property type="match status" value="1"/>
</dbReference>
<dbReference type="NCBIfam" id="NF008971">
    <property type="entry name" value="PRK12319.1"/>
    <property type="match status" value="1"/>
</dbReference>
<dbReference type="PANTHER" id="PTHR42853">
    <property type="entry name" value="ACETYL-COENZYME A CARBOXYLASE CARBOXYL TRANSFERASE SUBUNIT ALPHA"/>
    <property type="match status" value="1"/>
</dbReference>
<dbReference type="PANTHER" id="PTHR42853:SF3">
    <property type="entry name" value="ACETYL-COENZYME A CARBOXYLASE CARBOXYL TRANSFERASE SUBUNIT ALPHA, CHLOROPLASTIC"/>
    <property type="match status" value="1"/>
</dbReference>
<dbReference type="Pfam" id="PF03255">
    <property type="entry name" value="ACCA"/>
    <property type="match status" value="1"/>
</dbReference>
<dbReference type="PRINTS" id="PR01069">
    <property type="entry name" value="ACCCTRFRASEA"/>
</dbReference>
<dbReference type="SUPFAM" id="SSF52096">
    <property type="entry name" value="ClpP/crotonase"/>
    <property type="match status" value="1"/>
</dbReference>
<dbReference type="PROSITE" id="PS50989">
    <property type="entry name" value="COA_CT_CTER"/>
    <property type="match status" value="1"/>
</dbReference>